<organism>
    <name type="scientific">Dictyostelium discoideum</name>
    <name type="common">Social amoeba</name>
    <dbReference type="NCBI Taxonomy" id="44689"/>
    <lineage>
        <taxon>Eukaryota</taxon>
        <taxon>Amoebozoa</taxon>
        <taxon>Evosea</taxon>
        <taxon>Eumycetozoa</taxon>
        <taxon>Dictyostelia</taxon>
        <taxon>Dictyosteliales</taxon>
        <taxon>Dictyosteliaceae</taxon>
        <taxon>Dictyostelium</taxon>
    </lineage>
</organism>
<dbReference type="EMBL" id="AAFI02000104">
    <property type="protein sequence ID" value="EAL63582.1"/>
    <property type="molecule type" value="Genomic_DNA"/>
</dbReference>
<dbReference type="RefSeq" id="XP_637011.1">
    <property type="nucleotide sequence ID" value="XM_631919.1"/>
</dbReference>
<dbReference type="PaxDb" id="44689-DDB0219266"/>
<dbReference type="EnsemblProtists" id="EAL63582">
    <property type="protein sequence ID" value="EAL63582"/>
    <property type="gene ID" value="DDB_G0287871"/>
</dbReference>
<dbReference type="GeneID" id="8626266"/>
<dbReference type="KEGG" id="ddi:DDB_G0287871"/>
<dbReference type="dictyBase" id="DDB_G0287871"/>
<dbReference type="HOGENOM" id="CLU_3018290_0_0_1"/>
<dbReference type="InParanoid" id="Q54JZ1"/>
<dbReference type="PRO" id="PR:Q54JZ1"/>
<dbReference type="Proteomes" id="UP000002195">
    <property type="component" value="Chromosome 5"/>
</dbReference>
<feature type="chain" id="PRO_0000347013" description="Putative uncharacterized protein DDB_G0287871">
    <location>
        <begin position="1"/>
        <end position="56"/>
    </location>
</feature>
<feature type="region of interest" description="Disordered" evidence="1">
    <location>
        <begin position="15"/>
        <end position="56"/>
    </location>
</feature>
<proteinExistence type="predicted"/>
<name>Y9266_DICDI</name>
<gene>
    <name type="ORF">DDB_G0287871</name>
</gene>
<keyword id="KW-1185">Reference proteome</keyword>
<reference key="1">
    <citation type="journal article" date="2005" name="Nature">
        <title>The genome of the social amoeba Dictyostelium discoideum.</title>
        <authorList>
            <person name="Eichinger L."/>
            <person name="Pachebat J.A."/>
            <person name="Gloeckner G."/>
            <person name="Rajandream M.A."/>
            <person name="Sucgang R."/>
            <person name="Berriman M."/>
            <person name="Song J."/>
            <person name="Olsen R."/>
            <person name="Szafranski K."/>
            <person name="Xu Q."/>
            <person name="Tunggal B."/>
            <person name="Kummerfeld S."/>
            <person name="Madera M."/>
            <person name="Konfortov B.A."/>
            <person name="Rivero F."/>
            <person name="Bankier A.T."/>
            <person name="Lehmann R."/>
            <person name="Hamlin N."/>
            <person name="Davies R."/>
            <person name="Gaudet P."/>
            <person name="Fey P."/>
            <person name="Pilcher K."/>
            <person name="Chen G."/>
            <person name="Saunders D."/>
            <person name="Sodergren E.J."/>
            <person name="Davis P."/>
            <person name="Kerhornou A."/>
            <person name="Nie X."/>
            <person name="Hall N."/>
            <person name="Anjard C."/>
            <person name="Hemphill L."/>
            <person name="Bason N."/>
            <person name="Farbrother P."/>
            <person name="Desany B."/>
            <person name="Just E."/>
            <person name="Morio T."/>
            <person name="Rost R."/>
            <person name="Churcher C.M."/>
            <person name="Cooper J."/>
            <person name="Haydock S."/>
            <person name="van Driessche N."/>
            <person name="Cronin A."/>
            <person name="Goodhead I."/>
            <person name="Muzny D.M."/>
            <person name="Mourier T."/>
            <person name="Pain A."/>
            <person name="Lu M."/>
            <person name="Harper D."/>
            <person name="Lindsay R."/>
            <person name="Hauser H."/>
            <person name="James K.D."/>
            <person name="Quiles M."/>
            <person name="Madan Babu M."/>
            <person name="Saito T."/>
            <person name="Buchrieser C."/>
            <person name="Wardroper A."/>
            <person name="Felder M."/>
            <person name="Thangavelu M."/>
            <person name="Johnson D."/>
            <person name="Knights A."/>
            <person name="Loulseged H."/>
            <person name="Mungall K.L."/>
            <person name="Oliver K."/>
            <person name="Price C."/>
            <person name="Quail M.A."/>
            <person name="Urushihara H."/>
            <person name="Hernandez J."/>
            <person name="Rabbinowitsch E."/>
            <person name="Steffen D."/>
            <person name="Sanders M."/>
            <person name="Ma J."/>
            <person name="Kohara Y."/>
            <person name="Sharp S."/>
            <person name="Simmonds M.N."/>
            <person name="Spiegler S."/>
            <person name="Tivey A."/>
            <person name="Sugano S."/>
            <person name="White B."/>
            <person name="Walker D."/>
            <person name="Woodward J.R."/>
            <person name="Winckler T."/>
            <person name="Tanaka Y."/>
            <person name="Shaulsky G."/>
            <person name="Schleicher M."/>
            <person name="Weinstock G.M."/>
            <person name="Rosenthal A."/>
            <person name="Cox E.C."/>
            <person name="Chisholm R.L."/>
            <person name="Gibbs R.A."/>
            <person name="Loomis W.F."/>
            <person name="Platzer M."/>
            <person name="Kay R.R."/>
            <person name="Williams J.G."/>
            <person name="Dear P.H."/>
            <person name="Noegel A.A."/>
            <person name="Barrell B.G."/>
            <person name="Kuspa A."/>
        </authorList>
    </citation>
    <scope>NUCLEOTIDE SEQUENCE [LARGE SCALE GENOMIC DNA]</scope>
    <source>
        <strain>AX4</strain>
    </source>
</reference>
<accession>Q54JZ1</accession>
<protein>
    <recommendedName>
        <fullName>Putative uncharacterized protein DDB_G0287871</fullName>
    </recommendedName>
</protein>
<sequence>MVNLNKINSNSISNSIGNISSGNINNSIGNSSSSGCDDVFNNSTNNNNNNNNNNNK</sequence>
<evidence type="ECO:0000256" key="1">
    <source>
        <dbReference type="SAM" id="MobiDB-lite"/>
    </source>
</evidence>